<proteinExistence type="evidence at transcript level"/>
<evidence type="ECO:0000255" key="1">
    <source>
        <dbReference type="PROSITE-ProRule" id="PRU00037"/>
    </source>
</evidence>
<evidence type="ECO:0000255" key="2">
    <source>
        <dbReference type="PROSITE-ProRule" id="PRU00320"/>
    </source>
</evidence>
<evidence type="ECO:0000256" key="3">
    <source>
        <dbReference type="SAM" id="MobiDB-lite"/>
    </source>
</evidence>
<evidence type="ECO:0000269" key="4">
    <source>
    </source>
</evidence>
<evidence type="ECO:0000303" key="5">
    <source>
    </source>
</evidence>
<evidence type="ECO:0000305" key="6"/>
<evidence type="ECO:0000305" key="7">
    <source>
    </source>
</evidence>
<evidence type="ECO:0000312" key="8">
    <source>
        <dbReference type="EMBL" id="AAF47439.2"/>
    </source>
</evidence>
<gene>
    <name type="primary">bab1</name>
    <name type="synonym">bab</name>
    <name type="ORF">CG9097</name>
</gene>
<reference evidence="6" key="1">
    <citation type="journal article" date="2002" name="Development">
        <title>The bric a brac locus consists of two paralogous genes encoding BTB/POZ domain proteins and acts as a homeotic and morphogenetic regulator of imaginal development in Drosophila.</title>
        <authorList>
            <person name="Couderc J.-L.G."/>
            <person name="Godt D."/>
            <person name="Zollman S."/>
            <person name="Chen J."/>
            <person name="Li M."/>
            <person name="Tiong S."/>
            <person name="Cramton S.E."/>
            <person name="Sahut-Barnola I."/>
            <person name="Laski F.A."/>
        </authorList>
    </citation>
    <scope>NUCLEOTIDE SEQUENCE [MRNA]</scope>
    <scope>FUNCTION</scope>
    <scope>SUBCELLULAR LOCATION</scope>
    <scope>TISSUE SPECIFICITY</scope>
    <source>
        <tissue>Larva</tissue>
        <tissue>Ovary</tissue>
    </source>
</reference>
<reference key="2">
    <citation type="journal article" date="2000" name="Science">
        <title>The genome sequence of Drosophila melanogaster.</title>
        <authorList>
            <person name="Adams M.D."/>
            <person name="Celniker S.E."/>
            <person name="Holt R.A."/>
            <person name="Evans C.A."/>
            <person name="Gocayne J.D."/>
            <person name="Amanatides P.G."/>
            <person name="Scherer S.E."/>
            <person name="Li P.W."/>
            <person name="Hoskins R.A."/>
            <person name="Galle R.F."/>
            <person name="George R.A."/>
            <person name="Lewis S.E."/>
            <person name="Richards S."/>
            <person name="Ashburner M."/>
            <person name="Henderson S.N."/>
            <person name="Sutton G.G."/>
            <person name="Wortman J.R."/>
            <person name="Yandell M.D."/>
            <person name="Zhang Q."/>
            <person name="Chen L.X."/>
            <person name="Brandon R.C."/>
            <person name="Rogers Y.-H.C."/>
            <person name="Blazej R.G."/>
            <person name="Champe M."/>
            <person name="Pfeiffer B.D."/>
            <person name="Wan K.H."/>
            <person name="Doyle C."/>
            <person name="Baxter E.G."/>
            <person name="Helt G."/>
            <person name="Nelson C.R."/>
            <person name="Miklos G.L.G."/>
            <person name="Abril J.F."/>
            <person name="Agbayani A."/>
            <person name="An H.-J."/>
            <person name="Andrews-Pfannkoch C."/>
            <person name="Baldwin D."/>
            <person name="Ballew R.M."/>
            <person name="Basu A."/>
            <person name="Baxendale J."/>
            <person name="Bayraktaroglu L."/>
            <person name="Beasley E.M."/>
            <person name="Beeson K.Y."/>
            <person name="Benos P.V."/>
            <person name="Berman B.P."/>
            <person name="Bhandari D."/>
            <person name="Bolshakov S."/>
            <person name="Borkova D."/>
            <person name="Botchan M.R."/>
            <person name="Bouck J."/>
            <person name="Brokstein P."/>
            <person name="Brottier P."/>
            <person name="Burtis K.C."/>
            <person name="Busam D.A."/>
            <person name="Butler H."/>
            <person name="Cadieu E."/>
            <person name="Center A."/>
            <person name="Chandra I."/>
            <person name="Cherry J.M."/>
            <person name="Cawley S."/>
            <person name="Dahlke C."/>
            <person name="Davenport L.B."/>
            <person name="Davies P."/>
            <person name="de Pablos B."/>
            <person name="Delcher A."/>
            <person name="Deng Z."/>
            <person name="Mays A.D."/>
            <person name="Dew I."/>
            <person name="Dietz S.M."/>
            <person name="Dodson K."/>
            <person name="Doup L.E."/>
            <person name="Downes M."/>
            <person name="Dugan-Rocha S."/>
            <person name="Dunkov B.C."/>
            <person name="Dunn P."/>
            <person name="Durbin K.J."/>
            <person name="Evangelista C.C."/>
            <person name="Ferraz C."/>
            <person name="Ferriera S."/>
            <person name="Fleischmann W."/>
            <person name="Fosler C."/>
            <person name="Gabrielian A.E."/>
            <person name="Garg N.S."/>
            <person name="Gelbart W.M."/>
            <person name="Glasser K."/>
            <person name="Glodek A."/>
            <person name="Gong F."/>
            <person name="Gorrell J.H."/>
            <person name="Gu Z."/>
            <person name="Guan P."/>
            <person name="Harris M."/>
            <person name="Harris N.L."/>
            <person name="Harvey D.A."/>
            <person name="Heiman T.J."/>
            <person name="Hernandez J.R."/>
            <person name="Houck J."/>
            <person name="Hostin D."/>
            <person name="Houston K.A."/>
            <person name="Howland T.J."/>
            <person name="Wei M.-H."/>
            <person name="Ibegwam C."/>
            <person name="Jalali M."/>
            <person name="Kalush F."/>
            <person name="Karpen G.H."/>
            <person name="Ke Z."/>
            <person name="Kennison J.A."/>
            <person name="Ketchum K.A."/>
            <person name="Kimmel B.E."/>
            <person name="Kodira C.D."/>
            <person name="Kraft C.L."/>
            <person name="Kravitz S."/>
            <person name="Kulp D."/>
            <person name="Lai Z."/>
            <person name="Lasko P."/>
            <person name="Lei Y."/>
            <person name="Levitsky A.A."/>
            <person name="Li J.H."/>
            <person name="Li Z."/>
            <person name="Liang Y."/>
            <person name="Lin X."/>
            <person name="Liu X."/>
            <person name="Mattei B."/>
            <person name="McIntosh T.C."/>
            <person name="McLeod M.P."/>
            <person name="McPherson D."/>
            <person name="Merkulov G."/>
            <person name="Milshina N.V."/>
            <person name="Mobarry C."/>
            <person name="Morris J."/>
            <person name="Moshrefi A."/>
            <person name="Mount S.M."/>
            <person name="Moy M."/>
            <person name="Murphy B."/>
            <person name="Murphy L."/>
            <person name="Muzny D.M."/>
            <person name="Nelson D.L."/>
            <person name="Nelson D.R."/>
            <person name="Nelson K.A."/>
            <person name="Nixon K."/>
            <person name="Nusskern D.R."/>
            <person name="Pacleb J.M."/>
            <person name="Palazzolo M."/>
            <person name="Pittman G.S."/>
            <person name="Pan S."/>
            <person name="Pollard J."/>
            <person name="Puri V."/>
            <person name="Reese M.G."/>
            <person name="Reinert K."/>
            <person name="Remington K."/>
            <person name="Saunders R.D.C."/>
            <person name="Scheeler F."/>
            <person name="Shen H."/>
            <person name="Shue B.C."/>
            <person name="Siden-Kiamos I."/>
            <person name="Simpson M."/>
            <person name="Skupski M.P."/>
            <person name="Smith T.J."/>
            <person name="Spier E."/>
            <person name="Spradling A.C."/>
            <person name="Stapleton M."/>
            <person name="Strong R."/>
            <person name="Sun E."/>
            <person name="Svirskas R."/>
            <person name="Tector C."/>
            <person name="Turner R."/>
            <person name="Venter E."/>
            <person name="Wang A.H."/>
            <person name="Wang X."/>
            <person name="Wang Z.-Y."/>
            <person name="Wassarman D.A."/>
            <person name="Weinstock G.M."/>
            <person name="Weissenbach J."/>
            <person name="Williams S.M."/>
            <person name="Woodage T."/>
            <person name="Worley K.C."/>
            <person name="Wu D."/>
            <person name="Yang S."/>
            <person name="Yao Q.A."/>
            <person name="Ye J."/>
            <person name="Yeh R.-F."/>
            <person name="Zaveri J.S."/>
            <person name="Zhan M."/>
            <person name="Zhang G."/>
            <person name="Zhao Q."/>
            <person name="Zheng L."/>
            <person name="Zheng X.H."/>
            <person name="Zhong F.N."/>
            <person name="Zhong W."/>
            <person name="Zhou X."/>
            <person name="Zhu S.C."/>
            <person name="Zhu X."/>
            <person name="Smith H.O."/>
            <person name="Gibbs R.A."/>
            <person name="Myers E.W."/>
            <person name="Rubin G.M."/>
            <person name="Venter J.C."/>
        </authorList>
    </citation>
    <scope>NUCLEOTIDE SEQUENCE [LARGE SCALE GENOMIC DNA]</scope>
    <source>
        <strain>Berkeley</strain>
    </source>
</reference>
<reference evidence="6" key="3">
    <citation type="journal article" date="2002" name="Genome Biol.">
        <title>Annotation of the Drosophila melanogaster euchromatic genome: a systematic review.</title>
        <authorList>
            <person name="Misra S."/>
            <person name="Crosby M.A."/>
            <person name="Mungall C.J."/>
            <person name="Matthews B.B."/>
            <person name="Campbell K.S."/>
            <person name="Hradecky P."/>
            <person name="Huang Y."/>
            <person name="Kaminker J.S."/>
            <person name="Millburn G.H."/>
            <person name="Prochnik S.E."/>
            <person name="Smith C.D."/>
            <person name="Tupy J.L."/>
            <person name="Whitfield E.J."/>
            <person name="Bayraktaroglu L."/>
            <person name="Berman B.P."/>
            <person name="Bettencourt B.R."/>
            <person name="Celniker S.E."/>
            <person name="de Grey A.D.N.J."/>
            <person name="Drysdale R.A."/>
            <person name="Harris N.L."/>
            <person name="Richter J."/>
            <person name="Russo S."/>
            <person name="Schroeder A.J."/>
            <person name="Shu S.Q."/>
            <person name="Stapleton M."/>
            <person name="Yamada C."/>
            <person name="Ashburner M."/>
            <person name="Gelbart W.M."/>
            <person name="Rubin G.M."/>
            <person name="Lewis S.E."/>
        </authorList>
    </citation>
    <scope>GENOME REANNOTATION</scope>
    <source>
        <strain>Berkeley</strain>
    </source>
</reference>
<reference key="4">
    <citation type="journal article" date="2002" name="Genome Biol.">
        <title>A Drosophila full-length cDNA resource.</title>
        <authorList>
            <person name="Stapleton M."/>
            <person name="Carlson J.W."/>
            <person name="Brokstein P."/>
            <person name="Yu C."/>
            <person name="Champe M."/>
            <person name="George R.A."/>
            <person name="Guarin H."/>
            <person name="Kronmiller B."/>
            <person name="Pacleb J.M."/>
            <person name="Park S."/>
            <person name="Wan K.H."/>
            <person name="Rubin G.M."/>
            <person name="Celniker S.E."/>
        </authorList>
    </citation>
    <scope>NUCLEOTIDE SEQUENCE [LARGE SCALE MRNA] OF 24-512</scope>
    <source>
        <strain>Berkeley</strain>
        <tissue>Testis</tissue>
    </source>
</reference>
<reference evidence="6" key="5">
    <citation type="journal article" date="1995" name="Mol. Cell. Biol.">
        <title>The BTB domain of bric a brac mediates dimerization in vitro.</title>
        <authorList>
            <person name="Chen W."/>
            <person name="Zollman S."/>
            <person name="Couderc J.-L."/>
            <person name="Laski F.A."/>
        </authorList>
    </citation>
    <scope>RETRACTED PAPER</scope>
</reference>
<reference key="6">
    <citation type="journal article" date="1997" name="Mol. Cell. Biol.">
        <title>Retraction. The BTB domain of bric a brac mediates dimerization in vitro.</title>
        <authorList>
            <person name="Chen W."/>
            <person name="Zollman S."/>
            <person name="Couderc J.L."/>
            <person name="Laski F.A."/>
        </authorList>
    </citation>
    <scope>RETRACTION NOTICE OF PUBMED:7760839</scope>
</reference>
<organism evidence="8">
    <name type="scientific">Drosophila melanogaster</name>
    <name type="common">Fruit fly</name>
    <dbReference type="NCBI Taxonomy" id="7227"/>
    <lineage>
        <taxon>Eukaryota</taxon>
        <taxon>Metazoa</taxon>
        <taxon>Ecdysozoa</taxon>
        <taxon>Arthropoda</taxon>
        <taxon>Hexapoda</taxon>
        <taxon>Insecta</taxon>
        <taxon>Pterygota</taxon>
        <taxon>Neoptera</taxon>
        <taxon>Endopterygota</taxon>
        <taxon>Diptera</taxon>
        <taxon>Brachycera</taxon>
        <taxon>Muscomorpha</taxon>
        <taxon>Ephydroidea</taxon>
        <taxon>Drosophilidae</taxon>
        <taxon>Drosophila</taxon>
        <taxon>Sophophora</taxon>
    </lineage>
</organism>
<sequence>MASAQAETNVGLASEQGPVAQRQRKGTGSGADSPKSNRSSPTQQEEKRIKSEDRTSPTGGAKDEDKESQGHAVAGGGGSSPVSSPQGRSSSVASPSSSSQQFCLRWNNYQTNLTTIFDQLLQNECFVDVTLACDGRSMKAHKMVLSACSPYFQTLLAETPCQHPIVIMRDVNWSDLKAIVEFMYRGEINVSQDQIGPLLRIAEMLKVRGLADVTHMEAATAAAAAASSERMPSSPKESTSTSRTEHDREREAEELLAFMQPEKKLRTSDWDPAELRLSPLERQQGRNVRKRRWPSADTIFNPPAPPSPLSSLIAAERMELEQKERERQRDCSLMTPPPKPPMSSGSTVGATRRLETAIHALDMPSPAATPGPLSRSSRPHSQSPQQQQAQQQGQLPLPLPLHPHHHASPAPHPSQTAGSAHHPASPAGDSRFPLGPAAAMAAARELSGLGPGPSAEPRLPPPPPHHHGGGGVGGGGVGGGGAGGVGSGGGSSLADDLEIKPGIAEMIREEERAKMMENSHAWMGATGSTLAADSYQYQLQSMWQKCWNTNQNLMHHMRFRERGPLKSWRPETMAEAIFSVLKEGLSLSQAARKYDIPYPTFVLYANRVHNMLGPSIDGGPDLRPKGRGRPQRILLGIWPDEHIKGVIKTVVFRDTKDIKDESLAAHMPPYGRHSPAFPLQDLPLSYPGASGALAGAPSSMACPNGSGPQTGVGVAGEQHMSQETAAAVAAVAHNIRQQMQMAAVPPGLFNLPPHPGVGGGVGNVPGAAGGRASISPALSSGSGPRHAPSPCGPAGLLPNLPPSMAVALHHQQQQQAAHHHMQQLHLQQQQAHLHHHQQQQQQQQQQHHQGGHQVAHKSGFGASSSSSASSSSMGQHHAPKAKSSPLRSETPRLHSPLGDLGLDMASYKREFSPSRLFAEDLAELVGASVSSSSSSAAAATAPPERSAGAASAATGADAPSSSSSGGIKVEPITTTSE</sequence>
<name>BAB1_DROME</name>
<dbReference type="EMBL" id="AJ252082">
    <property type="protein sequence ID" value="CAB64385.1"/>
    <property type="molecule type" value="mRNA"/>
</dbReference>
<dbReference type="EMBL" id="AE014296">
    <property type="protein sequence ID" value="AAF47439.2"/>
    <property type="molecule type" value="Genomic_DNA"/>
</dbReference>
<dbReference type="EMBL" id="AY122075">
    <property type="protein sequence ID" value="AAM52587.1"/>
    <property type="status" value="ALT_SEQ"/>
    <property type="molecule type" value="mRNA"/>
</dbReference>
<dbReference type="EMBL" id="U01333">
    <property type="protein sequence ID" value="AAA87052.1"/>
    <property type="molecule type" value="Genomic_DNA"/>
</dbReference>
<dbReference type="RefSeq" id="NP_728565.1">
    <property type="nucleotide sequence ID" value="NM_167852.2"/>
</dbReference>
<dbReference type="SMR" id="Q9W0K7"/>
<dbReference type="BioGRID" id="63665">
    <property type="interactions" value="13"/>
</dbReference>
<dbReference type="DIP" id="DIP-18590N"/>
<dbReference type="FunCoup" id="Q9W0K7">
    <property type="interactions" value="12"/>
</dbReference>
<dbReference type="IntAct" id="Q9W0K7">
    <property type="interactions" value="9"/>
</dbReference>
<dbReference type="STRING" id="7227.FBpp0072538"/>
<dbReference type="GlyGen" id="Q9W0K7">
    <property type="glycosylation" value="1 site"/>
</dbReference>
<dbReference type="PaxDb" id="7227-FBpp0072538"/>
<dbReference type="EnsemblMetazoa" id="FBtr0072642">
    <property type="protein sequence ID" value="FBpp0072538"/>
    <property type="gene ID" value="FBgn0004870"/>
</dbReference>
<dbReference type="GeneID" id="38116"/>
<dbReference type="KEGG" id="dme:Dmel_CG9097"/>
<dbReference type="AGR" id="FB:FBgn0004870"/>
<dbReference type="CTD" id="38116"/>
<dbReference type="FlyBase" id="FBgn0004870">
    <property type="gene designation" value="bab1"/>
</dbReference>
<dbReference type="VEuPathDB" id="VectorBase:FBgn0004870"/>
<dbReference type="eggNOG" id="ENOG502RYZ4">
    <property type="taxonomic scope" value="Eukaryota"/>
</dbReference>
<dbReference type="GeneTree" id="ENSGT00940000173981"/>
<dbReference type="InParanoid" id="Q9W0K7"/>
<dbReference type="OMA" id="SLATHMP"/>
<dbReference type="OrthoDB" id="6611570at2759"/>
<dbReference type="PhylomeDB" id="Q9W0K7"/>
<dbReference type="SignaLink" id="Q9W0K7"/>
<dbReference type="BioGRID-ORCS" id="38116">
    <property type="hits" value="0 hits in 1 CRISPR screen"/>
</dbReference>
<dbReference type="GenomeRNAi" id="38116"/>
<dbReference type="PRO" id="PR:Q9W0K7"/>
<dbReference type="Proteomes" id="UP000000803">
    <property type="component" value="Chromosome 3L"/>
</dbReference>
<dbReference type="Bgee" id="FBgn0004870">
    <property type="expression patterns" value="Expressed in visceral muscle cell in digestive tract and 58 other cell types or tissues"/>
</dbReference>
<dbReference type="ExpressionAtlas" id="Q9W0K7">
    <property type="expression patterns" value="baseline and differential"/>
</dbReference>
<dbReference type="GO" id="GO:0005634">
    <property type="term" value="C:nucleus"/>
    <property type="evidence" value="ECO:0000314"/>
    <property type="project" value="UniProtKB"/>
</dbReference>
<dbReference type="GO" id="GO:0003700">
    <property type="term" value="F:DNA-binding transcription factor activity"/>
    <property type="evidence" value="ECO:0000304"/>
    <property type="project" value="FlyBase"/>
</dbReference>
<dbReference type="GO" id="GO:0003680">
    <property type="term" value="F:minor groove of adenine-thymine-rich DNA binding"/>
    <property type="evidence" value="ECO:0000314"/>
    <property type="project" value="FlyBase"/>
</dbReference>
<dbReference type="GO" id="GO:0007455">
    <property type="term" value="P:eye-antennal disc morphogenesis"/>
    <property type="evidence" value="ECO:0000270"/>
    <property type="project" value="UniProtKB"/>
</dbReference>
<dbReference type="GO" id="GO:0046660">
    <property type="term" value="P:female sex differentiation"/>
    <property type="evidence" value="ECO:0000304"/>
    <property type="project" value="FlyBase"/>
</dbReference>
<dbReference type="GO" id="GO:0007478">
    <property type="term" value="P:leg disc morphogenesis"/>
    <property type="evidence" value="ECO:0000270"/>
    <property type="project" value="UniProtKB"/>
</dbReference>
<dbReference type="GO" id="GO:0048086">
    <property type="term" value="P:negative regulation of developmental pigmentation"/>
    <property type="evidence" value="ECO:0000304"/>
    <property type="project" value="FlyBase"/>
</dbReference>
<dbReference type="GO" id="GO:0048092">
    <property type="term" value="P:negative regulation of male pigmentation"/>
    <property type="evidence" value="ECO:0000303"/>
    <property type="project" value="FlyBase"/>
</dbReference>
<dbReference type="GO" id="GO:0048070">
    <property type="term" value="P:regulation of developmental pigmentation"/>
    <property type="evidence" value="ECO:0000304"/>
    <property type="project" value="FlyBase"/>
</dbReference>
<dbReference type="GO" id="GO:0006355">
    <property type="term" value="P:regulation of DNA-templated transcription"/>
    <property type="evidence" value="ECO:0000304"/>
    <property type="project" value="UniProtKB"/>
</dbReference>
<dbReference type="GO" id="GO:0006357">
    <property type="term" value="P:regulation of transcription by RNA polymerase II"/>
    <property type="evidence" value="ECO:0000318"/>
    <property type="project" value="GO_Central"/>
</dbReference>
<dbReference type="GO" id="GO:0007548">
    <property type="term" value="P:sex differentiation"/>
    <property type="evidence" value="ECO:0000315"/>
    <property type="project" value="FlyBase"/>
</dbReference>
<dbReference type="GO" id="GO:0048071">
    <property type="term" value="P:sex-specific pigmentation"/>
    <property type="evidence" value="ECO:0000304"/>
    <property type="project" value="FlyBase"/>
</dbReference>
<dbReference type="CDD" id="cd18315">
    <property type="entry name" value="BTB_POZ_BAB-like"/>
    <property type="match status" value="1"/>
</dbReference>
<dbReference type="FunFam" id="3.30.710.10:FF:000120">
    <property type="entry name" value="Bric a brac 2, isoform B"/>
    <property type="match status" value="1"/>
</dbReference>
<dbReference type="Gene3D" id="3.30.710.10">
    <property type="entry name" value="Potassium Channel Kv1.1, Chain A"/>
    <property type="match status" value="1"/>
</dbReference>
<dbReference type="InterPro" id="IPR000210">
    <property type="entry name" value="BTB/POZ_dom"/>
</dbReference>
<dbReference type="InterPro" id="IPR051095">
    <property type="entry name" value="Dros_DevTransReg"/>
</dbReference>
<dbReference type="InterPro" id="IPR009057">
    <property type="entry name" value="Homeodomain-like_sf"/>
</dbReference>
<dbReference type="InterPro" id="IPR007889">
    <property type="entry name" value="HTH_Psq"/>
</dbReference>
<dbReference type="InterPro" id="IPR011333">
    <property type="entry name" value="SKP1/BTB/POZ_sf"/>
</dbReference>
<dbReference type="PANTHER" id="PTHR23110">
    <property type="entry name" value="BTB DOMAIN TRANSCRIPTION FACTOR"/>
    <property type="match status" value="1"/>
</dbReference>
<dbReference type="PANTHER" id="PTHR23110:SF109">
    <property type="entry name" value="FI07618P-RELATED"/>
    <property type="match status" value="1"/>
</dbReference>
<dbReference type="Pfam" id="PF00651">
    <property type="entry name" value="BTB"/>
    <property type="match status" value="1"/>
</dbReference>
<dbReference type="Pfam" id="PF05225">
    <property type="entry name" value="HTH_psq"/>
    <property type="match status" value="1"/>
</dbReference>
<dbReference type="SMART" id="SM00225">
    <property type="entry name" value="BTB"/>
    <property type="match status" value="1"/>
</dbReference>
<dbReference type="SUPFAM" id="SSF46689">
    <property type="entry name" value="Homeodomain-like"/>
    <property type="match status" value="1"/>
</dbReference>
<dbReference type="SUPFAM" id="SSF54695">
    <property type="entry name" value="POZ domain"/>
    <property type="match status" value="1"/>
</dbReference>
<dbReference type="PROSITE" id="PS50097">
    <property type="entry name" value="BTB"/>
    <property type="match status" value="1"/>
</dbReference>
<dbReference type="PROSITE" id="PS50960">
    <property type="entry name" value="HTH_PSQ"/>
    <property type="match status" value="1"/>
</dbReference>
<comment type="function">
    <text evidence="4 5">Probably acts as a transcriptional regulator. Required for the specification of the tarsal segment. Also involved in antenna development.</text>
</comment>
<comment type="subcellular location">
    <subcellularLocation>
        <location evidence="2 4">Nucleus</location>
    </subcellularLocation>
</comment>
<comment type="tissue specificity">
    <text evidence="4">Leg imaginal disk at the central region of the tarsus and in eye antenna disk at the basal cylinder.</text>
</comment>
<comment type="miscellaneous">
    <text>'Bric-a-brac' means 'jumble' in French (referring to the mutant ovary phenotype).</text>
</comment>
<comment type="caution">
    <text evidence="7">A paper showing that the protein forms homodimers via the BTB domain has been retracted by the authors, due to concerns regarding the validity of their data. However, they still consider that their main conclusions may be correct and require further testing.</text>
</comment>
<comment type="sequence caution" evidence="6">
    <conflict type="miscellaneous discrepancy">
        <sequence resource="EMBL-CDS" id="AAM52587"/>
    </conflict>
    <text>Probable cloning artifact.</text>
</comment>
<protein>
    <recommendedName>
        <fullName>Protein bric-a-brac 1</fullName>
    </recommendedName>
</protein>
<accession>Q9W0K7</accession>
<accession>Q23968</accession>
<accession>Q8MR78</accession>
<accession>Q9U1H7</accession>
<keyword id="KW-0238">DNA-binding</keyword>
<keyword id="KW-0539">Nucleus</keyword>
<keyword id="KW-1185">Reference proteome</keyword>
<keyword id="KW-0804">Transcription</keyword>
<keyword id="KW-0805">Transcription regulation</keyword>
<feature type="chain" id="PRO_0000064790" description="Protein bric-a-brac 1">
    <location>
        <begin position="1"/>
        <end position="977"/>
    </location>
</feature>
<feature type="domain" description="BTB" evidence="1 6">
    <location>
        <begin position="127"/>
        <end position="192"/>
    </location>
</feature>
<feature type="domain" description="HTH psq-type" evidence="2">
    <location>
        <begin position="559"/>
        <end position="611"/>
    </location>
</feature>
<feature type="DNA-binding region" description="H-T-H motif" evidence="2">
    <location>
        <begin position="569"/>
        <end position="614"/>
    </location>
</feature>
<feature type="DNA-binding region" description="A.T hook">
    <location>
        <begin position="621"/>
        <end position="632"/>
    </location>
</feature>
<feature type="region of interest" description="Disordered" evidence="3">
    <location>
        <begin position="1"/>
        <end position="97"/>
    </location>
</feature>
<feature type="region of interest" description="Disordered" evidence="3">
    <location>
        <begin position="221"/>
        <end position="249"/>
    </location>
</feature>
<feature type="region of interest" description="Disordered" evidence="3">
    <location>
        <begin position="281"/>
        <end position="348"/>
    </location>
</feature>
<feature type="region of interest" description="Disordered" evidence="3">
    <location>
        <begin position="362"/>
        <end position="434"/>
    </location>
</feature>
<feature type="region of interest" description="Disordered" evidence="3">
    <location>
        <begin position="447"/>
        <end position="497"/>
    </location>
</feature>
<feature type="region of interest" description="Disordered" evidence="3">
    <location>
        <begin position="772"/>
        <end position="900"/>
    </location>
</feature>
<feature type="region of interest" description="Disordered" evidence="3">
    <location>
        <begin position="925"/>
        <end position="977"/>
    </location>
</feature>
<feature type="compositionally biased region" description="Polar residues" evidence="3">
    <location>
        <begin position="34"/>
        <end position="43"/>
    </location>
</feature>
<feature type="compositionally biased region" description="Basic and acidic residues" evidence="3">
    <location>
        <begin position="44"/>
        <end position="69"/>
    </location>
</feature>
<feature type="compositionally biased region" description="Low complexity" evidence="3">
    <location>
        <begin position="80"/>
        <end position="97"/>
    </location>
</feature>
<feature type="compositionally biased region" description="Basic and acidic residues" evidence="3">
    <location>
        <begin position="316"/>
        <end position="330"/>
    </location>
</feature>
<feature type="compositionally biased region" description="Low complexity" evidence="3">
    <location>
        <begin position="372"/>
        <end position="396"/>
    </location>
</feature>
<feature type="compositionally biased region" description="Gly residues" evidence="3">
    <location>
        <begin position="469"/>
        <end position="491"/>
    </location>
</feature>
<feature type="compositionally biased region" description="Low complexity" evidence="3">
    <location>
        <begin position="804"/>
        <end position="816"/>
    </location>
</feature>
<feature type="compositionally biased region" description="Low complexity" evidence="3">
    <location>
        <begin position="838"/>
        <end position="853"/>
    </location>
</feature>
<feature type="compositionally biased region" description="Low complexity" evidence="3">
    <location>
        <begin position="862"/>
        <end position="872"/>
    </location>
</feature>
<feature type="compositionally biased region" description="Low complexity" evidence="3">
    <location>
        <begin position="925"/>
        <end position="966"/>
    </location>
</feature>
<feature type="sequence conflict" description="In Ref. 1; CAB64385." evidence="6" ref="1">
    <original>K</original>
    <variation>R</variation>
    <location>
        <position position="66"/>
    </location>
</feature>
<feature type="sequence conflict" description="In Ref. 1; CAB64385." evidence="6" ref="1">
    <original>IN</original>
    <variation>VS</variation>
    <location>
        <begin position="188"/>
        <end position="189"/>
    </location>
</feature>
<feature type="sequence conflict" description="In Ref. 1; CAB64385 and 4; AAM52587." evidence="6" ref="1 4">
    <original>A</original>
    <variation>R</variation>
    <location>
        <position position="221"/>
    </location>
</feature>
<feature type="sequence conflict" description="In Ref. 1; CAB64385." evidence="6" ref="1">
    <original>A</original>
    <variation>G</variation>
    <location>
        <position position="257"/>
    </location>
</feature>
<feature type="sequence conflict" description="In Ref. 1; CAB64385." evidence="6" ref="1">
    <original>KL</original>
    <variation>NV</variation>
    <location>
        <begin position="264"/>
        <end position="265"/>
    </location>
</feature>
<feature type="sequence conflict" description="In Ref. 1; CAB64385." evidence="6" ref="1">
    <original>QQ</original>
    <variation>HE</variation>
    <location>
        <begin position="283"/>
        <end position="284"/>
    </location>
</feature>
<feature type="sequence conflict" description="In Ref. 1; CAB64385." evidence="6" ref="1">
    <original>D</original>
    <variation>E</variation>
    <location>
        <position position="362"/>
    </location>
</feature>
<feature type="sequence conflict" description="In Ref. 1; CAB64385 and 4; AAM52587." evidence="6" ref="1 4">
    <original>R</original>
    <variation>M</variation>
    <location>
        <position position="444"/>
    </location>
</feature>
<feature type="sequence conflict" description="In Ref. 1; CAB64385." evidence="6" ref="1">
    <original>N</original>
    <variation>S</variation>
    <location>
        <position position="763"/>
    </location>
</feature>
<feature type="sequence conflict" description="In Ref. 1; CAB64385." evidence="6" ref="1">
    <original>Q</original>
    <variation>QQQ</variation>
    <location>
        <position position="846"/>
    </location>
</feature>
<feature type="sequence conflict" description="In Ref. 1; CAB64385." evidence="6" ref="1">
    <original>A</original>
    <variation>V</variation>
    <location>
        <position position="862"/>
    </location>
</feature>